<protein>
    <recommendedName>
        <fullName evidence="1">N-acetylmuramic acid 6-phosphate etherase</fullName>
        <shortName evidence="1">MurNAc-6-P etherase</shortName>
        <ecNumber evidence="1">4.2.1.126</ecNumber>
    </recommendedName>
    <alternativeName>
        <fullName evidence="1">N-acetylmuramic acid 6-phosphate hydrolase</fullName>
    </alternativeName>
    <alternativeName>
        <fullName evidence="1">N-acetylmuramic acid 6-phosphate lyase</fullName>
    </alternativeName>
</protein>
<gene>
    <name evidence="1" type="primary">murQ</name>
    <name type="ordered locus">RB7514</name>
</gene>
<proteinExistence type="inferred from homology"/>
<organism>
    <name type="scientific">Rhodopirellula baltica (strain DSM 10527 / NCIMB 13988 / SH1)</name>
    <dbReference type="NCBI Taxonomy" id="243090"/>
    <lineage>
        <taxon>Bacteria</taxon>
        <taxon>Pseudomonadati</taxon>
        <taxon>Planctomycetota</taxon>
        <taxon>Planctomycetia</taxon>
        <taxon>Pirellulales</taxon>
        <taxon>Pirellulaceae</taxon>
        <taxon>Rhodopirellula</taxon>
    </lineage>
</organism>
<name>MURQ_RHOBA</name>
<accession>Q7UNL6</accession>
<reference key="1">
    <citation type="journal article" date="2003" name="Proc. Natl. Acad. Sci. U.S.A.">
        <title>Complete genome sequence of the marine planctomycete Pirellula sp. strain 1.</title>
        <authorList>
            <person name="Gloeckner F.O."/>
            <person name="Kube M."/>
            <person name="Bauer M."/>
            <person name="Teeling H."/>
            <person name="Lombardot T."/>
            <person name="Ludwig W."/>
            <person name="Gade D."/>
            <person name="Beck A."/>
            <person name="Borzym K."/>
            <person name="Heitmann K."/>
            <person name="Rabus R."/>
            <person name="Schlesner H."/>
            <person name="Amann R."/>
            <person name="Reinhardt R."/>
        </authorList>
    </citation>
    <scope>NUCLEOTIDE SEQUENCE [LARGE SCALE GENOMIC DNA]</scope>
    <source>
        <strain>DSM 10527 / NCIMB 13988 / SH1</strain>
    </source>
</reference>
<dbReference type="EC" id="4.2.1.126" evidence="1"/>
<dbReference type="EMBL" id="BX294146">
    <property type="protein sequence ID" value="CAD75403.1"/>
    <property type="molecule type" value="Genomic_DNA"/>
</dbReference>
<dbReference type="RefSeq" id="NP_867856.1">
    <property type="nucleotide sequence ID" value="NC_005027.1"/>
</dbReference>
<dbReference type="RefSeq" id="WP_011121425.1">
    <property type="nucleotide sequence ID" value="NC_005027.1"/>
</dbReference>
<dbReference type="SMR" id="Q7UNL6"/>
<dbReference type="FunCoup" id="Q7UNL6">
    <property type="interactions" value="122"/>
</dbReference>
<dbReference type="STRING" id="243090.RB7514"/>
<dbReference type="EnsemblBacteria" id="CAD75403">
    <property type="protein sequence ID" value="CAD75403"/>
    <property type="gene ID" value="RB7514"/>
</dbReference>
<dbReference type="KEGG" id="rba:RB7514"/>
<dbReference type="PATRIC" id="fig|243090.15.peg.3628"/>
<dbReference type="eggNOG" id="COG2103">
    <property type="taxonomic scope" value="Bacteria"/>
</dbReference>
<dbReference type="HOGENOM" id="CLU_049049_1_1_0"/>
<dbReference type="InParanoid" id="Q7UNL6"/>
<dbReference type="OrthoDB" id="9813395at2"/>
<dbReference type="UniPathway" id="UPA00342"/>
<dbReference type="Proteomes" id="UP000001025">
    <property type="component" value="Chromosome"/>
</dbReference>
<dbReference type="GO" id="GO:0097367">
    <property type="term" value="F:carbohydrate derivative binding"/>
    <property type="evidence" value="ECO:0007669"/>
    <property type="project" value="InterPro"/>
</dbReference>
<dbReference type="GO" id="GO:0016835">
    <property type="term" value="F:carbon-oxygen lyase activity"/>
    <property type="evidence" value="ECO:0000318"/>
    <property type="project" value="GO_Central"/>
</dbReference>
<dbReference type="GO" id="GO:0016803">
    <property type="term" value="F:ether hydrolase activity"/>
    <property type="evidence" value="ECO:0000318"/>
    <property type="project" value="GO_Central"/>
</dbReference>
<dbReference type="GO" id="GO:0046348">
    <property type="term" value="P:amino sugar catabolic process"/>
    <property type="evidence" value="ECO:0000318"/>
    <property type="project" value="GO_Central"/>
</dbReference>
<dbReference type="GO" id="GO:0097173">
    <property type="term" value="P:N-acetylmuramic acid catabolic process"/>
    <property type="evidence" value="ECO:0007669"/>
    <property type="project" value="UniProtKB-UniPathway"/>
</dbReference>
<dbReference type="GO" id="GO:0009254">
    <property type="term" value="P:peptidoglycan turnover"/>
    <property type="evidence" value="ECO:0000318"/>
    <property type="project" value="GO_Central"/>
</dbReference>
<dbReference type="CDD" id="cd05007">
    <property type="entry name" value="SIS_Etherase"/>
    <property type="match status" value="1"/>
</dbReference>
<dbReference type="FunFam" id="1.10.8.1080:FF:000001">
    <property type="entry name" value="N-acetylmuramic acid 6-phosphate etherase"/>
    <property type="match status" value="1"/>
</dbReference>
<dbReference type="FunFam" id="3.40.50.10490:FF:000014">
    <property type="entry name" value="N-acetylmuramic acid 6-phosphate etherase"/>
    <property type="match status" value="1"/>
</dbReference>
<dbReference type="Gene3D" id="1.10.8.1080">
    <property type="match status" value="1"/>
</dbReference>
<dbReference type="Gene3D" id="3.40.50.10490">
    <property type="entry name" value="Glucose-6-phosphate isomerase like protein, domain 1"/>
    <property type="match status" value="1"/>
</dbReference>
<dbReference type="HAMAP" id="MF_00068">
    <property type="entry name" value="MurQ"/>
    <property type="match status" value="1"/>
</dbReference>
<dbReference type="InterPro" id="IPR005488">
    <property type="entry name" value="Etherase_MurQ"/>
</dbReference>
<dbReference type="InterPro" id="IPR005486">
    <property type="entry name" value="Glucokinase_regulatory_CS"/>
</dbReference>
<dbReference type="InterPro" id="IPR040190">
    <property type="entry name" value="MURQ/GCKR"/>
</dbReference>
<dbReference type="InterPro" id="IPR001347">
    <property type="entry name" value="SIS_dom"/>
</dbReference>
<dbReference type="InterPro" id="IPR046348">
    <property type="entry name" value="SIS_dom_sf"/>
</dbReference>
<dbReference type="NCBIfam" id="TIGR00274">
    <property type="entry name" value="N-acetylmuramic acid 6-phosphate etherase"/>
    <property type="match status" value="1"/>
</dbReference>
<dbReference type="NCBIfam" id="NF003915">
    <property type="entry name" value="PRK05441.1"/>
    <property type="match status" value="1"/>
</dbReference>
<dbReference type="NCBIfam" id="NF009222">
    <property type="entry name" value="PRK12570.1"/>
    <property type="match status" value="1"/>
</dbReference>
<dbReference type="PANTHER" id="PTHR10088">
    <property type="entry name" value="GLUCOKINASE REGULATORY PROTEIN"/>
    <property type="match status" value="1"/>
</dbReference>
<dbReference type="PANTHER" id="PTHR10088:SF4">
    <property type="entry name" value="GLUCOKINASE REGULATORY PROTEIN"/>
    <property type="match status" value="1"/>
</dbReference>
<dbReference type="Pfam" id="PF22645">
    <property type="entry name" value="GKRP_SIS_N"/>
    <property type="match status" value="1"/>
</dbReference>
<dbReference type="SUPFAM" id="SSF53697">
    <property type="entry name" value="SIS domain"/>
    <property type="match status" value="1"/>
</dbReference>
<dbReference type="PROSITE" id="PS01272">
    <property type="entry name" value="GCKR"/>
    <property type="match status" value="1"/>
</dbReference>
<dbReference type="PROSITE" id="PS51464">
    <property type="entry name" value="SIS"/>
    <property type="match status" value="1"/>
</dbReference>
<evidence type="ECO:0000255" key="1">
    <source>
        <dbReference type="HAMAP-Rule" id="MF_00068"/>
    </source>
</evidence>
<keyword id="KW-0119">Carbohydrate metabolism</keyword>
<keyword id="KW-0456">Lyase</keyword>
<keyword id="KW-1185">Reference proteome</keyword>
<feature type="chain" id="PRO_0000249646" description="N-acetylmuramic acid 6-phosphate etherase">
    <location>
        <begin position="1"/>
        <end position="302"/>
    </location>
</feature>
<feature type="domain" description="SIS" evidence="1">
    <location>
        <begin position="57"/>
        <end position="220"/>
    </location>
</feature>
<feature type="active site" description="Proton donor" evidence="1">
    <location>
        <position position="85"/>
    </location>
</feature>
<feature type="active site" evidence="1">
    <location>
        <position position="116"/>
    </location>
</feature>
<sequence length="302" mass="32061">MLNQLNQLTTEASNPASAQIDSLSALQIVQLINQQDALVAAAVNTQAEMIAEAVDVIADRFRSNGRLIYLGAGTSGRLGVLDASECPPTFRTPPEMVVGVIAGGPEALTRAIEGAEDHPEFAERDLAKINLSSNDVLVGIATSGRTPYVIGGLKYARSIGAFTIGLSCNPNCQLRPLSQIMIAPIVGPEIVSGSTRMKAGTATKMVLNMLTTGAMIRIGKTYGNRMVDVRATNEKLVARSRQMLSEIVGISGDQAEQLLQQCDGEVKTAIVVHIKEVSPQTARQMLVDVDGHLSRLLATPSE</sequence>
<comment type="function">
    <text evidence="1">Specifically catalyzes the cleavage of the D-lactyl ether substituent of MurNAc 6-phosphate, producing GlcNAc 6-phosphate and D-lactate.</text>
</comment>
<comment type="catalytic activity">
    <reaction evidence="1">
        <text>N-acetyl-D-muramate 6-phosphate + H2O = N-acetyl-D-glucosamine 6-phosphate + (R)-lactate</text>
        <dbReference type="Rhea" id="RHEA:26410"/>
        <dbReference type="ChEBI" id="CHEBI:15377"/>
        <dbReference type="ChEBI" id="CHEBI:16004"/>
        <dbReference type="ChEBI" id="CHEBI:57513"/>
        <dbReference type="ChEBI" id="CHEBI:58722"/>
        <dbReference type="EC" id="4.2.1.126"/>
    </reaction>
</comment>
<comment type="pathway">
    <text evidence="1">Amino-sugar metabolism; N-acetylmuramate degradation.</text>
</comment>
<comment type="subunit">
    <text evidence="1">Homodimer.</text>
</comment>
<comment type="miscellaneous">
    <text evidence="1">A lyase-type mechanism (elimination/hydration) is suggested for the cleavage of the lactyl ether bond of MurNAc 6-phosphate, with the formation of an alpha,beta-unsaturated aldehyde intermediate with (E)-stereochemistry, followed by the syn addition of water to give product.</text>
</comment>
<comment type="similarity">
    <text evidence="1">Belongs to the GCKR-like family. MurNAc-6-P etherase subfamily.</text>
</comment>